<protein>
    <recommendedName>
        <fullName>CASP-like protein 1C2</fullName>
        <shortName>ZmCASPL1C2</shortName>
    </recommendedName>
</protein>
<sequence>MAKLHRLISAVLRLAAAGAAAAAAVIMVTSHETTSLFGIEMEAKYSYTPSFVFFVVAFAVTFAYSLLAAVLVRPGTTASRLVLLSDVTVGMLLTGAVAATGAISQVGKSGNEHAGWLPICAQVQAYCGHVMGALIAGFVSLLLYFLIIMYSLHAVAEPLCSCH</sequence>
<organism>
    <name type="scientific">Zea mays</name>
    <name type="common">Maize</name>
    <dbReference type="NCBI Taxonomy" id="4577"/>
    <lineage>
        <taxon>Eukaryota</taxon>
        <taxon>Viridiplantae</taxon>
        <taxon>Streptophyta</taxon>
        <taxon>Embryophyta</taxon>
        <taxon>Tracheophyta</taxon>
        <taxon>Spermatophyta</taxon>
        <taxon>Magnoliopsida</taxon>
        <taxon>Liliopsida</taxon>
        <taxon>Poales</taxon>
        <taxon>Poaceae</taxon>
        <taxon>PACMAD clade</taxon>
        <taxon>Panicoideae</taxon>
        <taxon>Andropogonodae</taxon>
        <taxon>Andropogoneae</taxon>
        <taxon>Tripsacinae</taxon>
        <taxon>Zea</taxon>
    </lineage>
</organism>
<proteinExistence type="evidence at transcript level"/>
<accession>B6SZU6</accession>
<reference key="1">
    <citation type="journal article" date="2009" name="Plant Mol. Biol.">
        <title>Insights into corn genes derived from large-scale cDNA sequencing.</title>
        <authorList>
            <person name="Alexandrov N.N."/>
            <person name="Brover V.V."/>
            <person name="Freidin S."/>
            <person name="Troukhan M.E."/>
            <person name="Tatarinova T.V."/>
            <person name="Zhang H."/>
            <person name="Swaller T.J."/>
            <person name="Lu Y.-P."/>
            <person name="Bouck J."/>
            <person name="Flavell R.B."/>
            <person name="Feldmann K.A."/>
        </authorList>
    </citation>
    <scope>NUCLEOTIDE SEQUENCE [LARGE SCALE MRNA]</scope>
</reference>
<reference key="2">
    <citation type="journal article" date="2014" name="Plant Physiol.">
        <title>Functional and evolutionary analysis of the CASPARIAN STRIP MEMBRANE DOMAIN PROTEIN family.</title>
        <authorList>
            <person name="Roppolo D."/>
            <person name="Boeckmann B."/>
            <person name="Pfister A."/>
            <person name="Boutet E."/>
            <person name="Rubio M.C."/>
            <person name="Denervaud-Tendon V."/>
            <person name="Vermeer J.E."/>
            <person name="Gheyselinck J."/>
            <person name="Xenarios I."/>
            <person name="Geldner N."/>
        </authorList>
    </citation>
    <scope>GENE FAMILY</scope>
    <scope>NOMENCLATURE</scope>
</reference>
<comment type="subunit">
    <text evidence="1">Homodimer and heterodimers.</text>
</comment>
<comment type="subcellular location">
    <subcellularLocation>
        <location evidence="1">Cell membrane</location>
        <topology evidence="1">Multi-pass membrane protein</topology>
    </subcellularLocation>
</comment>
<comment type="similarity">
    <text evidence="3">Belongs to the Casparian strip membrane proteins (CASP) family.</text>
</comment>
<evidence type="ECO:0000250" key="1"/>
<evidence type="ECO:0000255" key="2"/>
<evidence type="ECO:0000305" key="3"/>
<feature type="chain" id="PRO_0000370277" description="CASP-like protein 1C2">
    <location>
        <begin position="1"/>
        <end position="163"/>
    </location>
</feature>
<feature type="topological domain" description="Cytoplasmic" evidence="2">
    <location>
        <begin position="1"/>
        <end position="7"/>
    </location>
</feature>
<feature type="transmembrane region" description="Helical" evidence="2">
    <location>
        <begin position="8"/>
        <end position="28"/>
    </location>
</feature>
<feature type="topological domain" description="Extracellular" evidence="2">
    <location>
        <begin position="29"/>
        <end position="50"/>
    </location>
</feature>
<feature type="transmembrane region" description="Helical" evidence="2">
    <location>
        <begin position="51"/>
        <end position="71"/>
    </location>
</feature>
<feature type="topological domain" description="Cytoplasmic" evidence="2">
    <location>
        <begin position="72"/>
        <end position="80"/>
    </location>
</feature>
<feature type="transmembrane region" description="Helical" evidence="2">
    <location>
        <begin position="81"/>
        <end position="101"/>
    </location>
</feature>
<feature type="topological domain" description="Extracellular" evidence="2">
    <location>
        <begin position="102"/>
        <end position="129"/>
    </location>
</feature>
<feature type="transmembrane region" description="Helical" evidence="2">
    <location>
        <begin position="130"/>
        <end position="150"/>
    </location>
</feature>
<feature type="topological domain" description="Cytoplasmic" evidence="2">
    <location>
        <begin position="151"/>
        <end position="163"/>
    </location>
</feature>
<name>CSPL5_MAIZE</name>
<keyword id="KW-1003">Cell membrane</keyword>
<keyword id="KW-0472">Membrane</keyword>
<keyword id="KW-1185">Reference proteome</keyword>
<keyword id="KW-0812">Transmembrane</keyword>
<keyword id="KW-1133">Transmembrane helix</keyword>
<dbReference type="EMBL" id="EU958261">
    <property type="protein sequence ID" value="ACG30379.1"/>
    <property type="molecule type" value="mRNA"/>
</dbReference>
<dbReference type="RefSeq" id="NP_001148274.1">
    <property type="nucleotide sequence ID" value="NM_001154802.1"/>
</dbReference>
<dbReference type="RefSeq" id="NP_001356212.1">
    <property type="nucleotide sequence ID" value="NM_001369283.1"/>
</dbReference>
<dbReference type="SMR" id="B6SZU6"/>
<dbReference type="FunCoup" id="B6SZU6">
    <property type="interactions" value="2373"/>
</dbReference>
<dbReference type="PaxDb" id="4577-GRMZM2G038780_P01"/>
<dbReference type="EnsemblPlants" id="Zm00001eb347520_T001">
    <property type="protein sequence ID" value="Zm00001eb347520_P001"/>
    <property type="gene ID" value="Zm00001eb347520"/>
</dbReference>
<dbReference type="GeneID" id="100281882"/>
<dbReference type="Gramene" id="Zm00001eb347520_T001">
    <property type="protein sequence ID" value="Zm00001eb347520_P001"/>
    <property type="gene ID" value="Zm00001eb347520"/>
</dbReference>
<dbReference type="eggNOG" id="ENOG502RZXX">
    <property type="taxonomic scope" value="Eukaryota"/>
</dbReference>
<dbReference type="HOGENOM" id="CLU_066104_3_0_1"/>
<dbReference type="InParanoid" id="B6SZU6"/>
<dbReference type="OMA" id="PKFCDQI"/>
<dbReference type="OrthoDB" id="1906221at2759"/>
<dbReference type="Proteomes" id="UP000007305">
    <property type="component" value="Chromosome 8"/>
</dbReference>
<dbReference type="ExpressionAtlas" id="B6SZU6">
    <property type="expression patterns" value="baseline and differential"/>
</dbReference>
<dbReference type="GO" id="GO:0005886">
    <property type="term" value="C:plasma membrane"/>
    <property type="evidence" value="ECO:0000318"/>
    <property type="project" value="GO_Central"/>
</dbReference>
<dbReference type="GO" id="GO:0035264">
    <property type="term" value="P:multicellular organism growth"/>
    <property type="evidence" value="ECO:0007669"/>
    <property type="project" value="EnsemblPlants"/>
</dbReference>
<dbReference type="GO" id="GO:0009733">
    <property type="term" value="P:response to auxin"/>
    <property type="evidence" value="ECO:0007669"/>
    <property type="project" value="EnsemblPlants"/>
</dbReference>
<dbReference type="GO" id="GO:0009741">
    <property type="term" value="P:response to brassinosteroid"/>
    <property type="evidence" value="ECO:0007669"/>
    <property type="project" value="EnsemblPlants"/>
</dbReference>
<dbReference type="GO" id="GO:0009826">
    <property type="term" value="P:unidimensional cell growth"/>
    <property type="evidence" value="ECO:0007669"/>
    <property type="project" value="EnsemblPlants"/>
</dbReference>
<dbReference type="InterPro" id="IPR006459">
    <property type="entry name" value="CASP/CASPL"/>
</dbReference>
<dbReference type="InterPro" id="IPR006702">
    <property type="entry name" value="CASP_dom"/>
</dbReference>
<dbReference type="InterPro" id="IPR044173">
    <property type="entry name" value="CASPL"/>
</dbReference>
<dbReference type="NCBIfam" id="TIGR01569">
    <property type="entry name" value="A_tha_TIGR01569"/>
    <property type="match status" value="1"/>
</dbReference>
<dbReference type="PANTHER" id="PTHR36488">
    <property type="entry name" value="CASP-LIKE PROTEIN 1U1"/>
    <property type="match status" value="1"/>
</dbReference>
<dbReference type="PANTHER" id="PTHR36488:SF8">
    <property type="entry name" value="CASP-LIKE PROTEIN 1U1"/>
    <property type="match status" value="1"/>
</dbReference>
<dbReference type="Pfam" id="PF04535">
    <property type="entry name" value="CASP_dom"/>
    <property type="match status" value="1"/>
</dbReference>